<name>YD022_YEAST</name>
<feature type="chain" id="PRO_0000309014" description="Uncharacterized protein YDL022C-A">
    <location>
        <begin position="1"/>
        <end position="82"/>
    </location>
</feature>
<dbReference type="EMBL" id="Z48432">
    <property type="status" value="NOT_ANNOTATED_CDS"/>
    <property type="molecule type" value="Genomic_DNA"/>
</dbReference>
<dbReference type="EMBL" id="Z74071">
    <property type="status" value="NOT_ANNOTATED_CDS"/>
    <property type="molecule type" value="Genomic_DNA"/>
</dbReference>
<dbReference type="EMBL" id="Z74072">
    <property type="status" value="NOT_ANNOTATED_CDS"/>
    <property type="molecule type" value="Genomic_DNA"/>
</dbReference>
<dbReference type="EMBL" id="BK006938">
    <property type="protein sequence ID" value="DAA35098.1"/>
    <property type="molecule type" value="Genomic_DNA"/>
</dbReference>
<dbReference type="RefSeq" id="NP_001257670.1">
    <property type="nucleotide sequence ID" value="NM_001270741.1"/>
</dbReference>
<dbReference type="FunCoup" id="P0C5L6">
    <property type="interactions" value="8"/>
</dbReference>
<dbReference type="STRING" id="4932.YDL022C-A"/>
<dbReference type="PaxDb" id="4932-YDL022C-A"/>
<dbReference type="EnsemblFungi" id="YDL022C-A_mRNA">
    <property type="protein sequence ID" value="YDL022C-A"/>
    <property type="gene ID" value="YDL022C-A"/>
</dbReference>
<dbReference type="GeneID" id="13393611"/>
<dbReference type="KEGG" id="sce:YDL022C-A"/>
<dbReference type="AGR" id="SGD:S000028537"/>
<dbReference type="SGD" id="S000028537">
    <property type="gene designation" value="YDL022C-A"/>
</dbReference>
<dbReference type="VEuPathDB" id="FungiDB:YDL022C-A"/>
<dbReference type="HOGENOM" id="CLU_2559600_0_0_1"/>
<dbReference type="InParanoid" id="P0C5L6"/>
<dbReference type="BioCyc" id="YEAST:G3O-30115-MONOMER"/>
<dbReference type="BioGRID-ORCS" id="13393611">
    <property type="hits" value="10 hits in 10 CRISPR screens"/>
</dbReference>
<dbReference type="PRO" id="PR:P0C5L6"/>
<dbReference type="Proteomes" id="UP000002311">
    <property type="component" value="Chromosome IV"/>
</dbReference>
<dbReference type="RNAct" id="P0C5L6">
    <property type="molecule type" value="protein"/>
</dbReference>
<dbReference type="GO" id="GO:0005829">
    <property type="term" value="C:cytosol"/>
    <property type="evidence" value="ECO:0007005"/>
    <property type="project" value="SGD"/>
</dbReference>
<reference key="1">
    <citation type="journal article" date="1997" name="Nature">
        <title>The nucleotide sequence of Saccharomyces cerevisiae chromosome IV.</title>
        <authorList>
            <person name="Jacq C."/>
            <person name="Alt-Moerbe J."/>
            <person name="Andre B."/>
            <person name="Arnold W."/>
            <person name="Bahr A."/>
            <person name="Ballesta J.P.G."/>
            <person name="Bargues M."/>
            <person name="Baron L."/>
            <person name="Becker A."/>
            <person name="Biteau N."/>
            <person name="Bloecker H."/>
            <person name="Blugeon C."/>
            <person name="Boskovic J."/>
            <person name="Brandt P."/>
            <person name="Brueckner M."/>
            <person name="Buitrago M.J."/>
            <person name="Coster F."/>
            <person name="Delaveau T."/>
            <person name="del Rey F."/>
            <person name="Dujon B."/>
            <person name="Eide L.G."/>
            <person name="Garcia-Cantalejo J.M."/>
            <person name="Goffeau A."/>
            <person name="Gomez-Peris A."/>
            <person name="Granotier C."/>
            <person name="Hanemann V."/>
            <person name="Hankeln T."/>
            <person name="Hoheisel J.D."/>
            <person name="Jaeger W."/>
            <person name="Jimenez A."/>
            <person name="Jonniaux J.-L."/>
            <person name="Kraemer C."/>
            <person name="Kuester H."/>
            <person name="Laamanen P."/>
            <person name="Legros Y."/>
            <person name="Louis E.J."/>
            <person name="Moeller-Rieker S."/>
            <person name="Monnet A."/>
            <person name="Moro M."/>
            <person name="Mueller-Auer S."/>
            <person name="Nussbaumer B."/>
            <person name="Paricio N."/>
            <person name="Paulin L."/>
            <person name="Perea J."/>
            <person name="Perez-Alonso M."/>
            <person name="Perez-Ortin J.E."/>
            <person name="Pohl T.M."/>
            <person name="Prydz H."/>
            <person name="Purnelle B."/>
            <person name="Rasmussen S.W."/>
            <person name="Remacha M.A."/>
            <person name="Revuelta J.L."/>
            <person name="Rieger M."/>
            <person name="Salom D."/>
            <person name="Saluz H.P."/>
            <person name="Saiz J.E."/>
            <person name="Saren A.-M."/>
            <person name="Schaefer M."/>
            <person name="Scharfe M."/>
            <person name="Schmidt E.R."/>
            <person name="Schneider C."/>
            <person name="Scholler P."/>
            <person name="Schwarz S."/>
            <person name="Soler-Mira A."/>
            <person name="Urrestarazu L.A."/>
            <person name="Verhasselt P."/>
            <person name="Vissers S."/>
            <person name="Voet M."/>
            <person name="Volckaert G."/>
            <person name="Wagner G."/>
            <person name="Wambutt R."/>
            <person name="Wedler E."/>
            <person name="Wedler H."/>
            <person name="Woelfl S."/>
            <person name="Harris D.E."/>
            <person name="Bowman S."/>
            <person name="Brown D."/>
            <person name="Churcher C.M."/>
            <person name="Connor R."/>
            <person name="Dedman K."/>
            <person name="Gentles S."/>
            <person name="Hamlin N."/>
            <person name="Hunt S."/>
            <person name="Jones L."/>
            <person name="McDonald S."/>
            <person name="Murphy L.D."/>
            <person name="Niblett D."/>
            <person name="Odell C."/>
            <person name="Oliver K."/>
            <person name="Rajandream M.A."/>
            <person name="Richards C."/>
            <person name="Shore L."/>
            <person name="Walsh S.V."/>
            <person name="Barrell B.G."/>
            <person name="Dietrich F.S."/>
            <person name="Mulligan J.T."/>
            <person name="Allen E."/>
            <person name="Araujo R."/>
            <person name="Aviles E."/>
            <person name="Berno A."/>
            <person name="Carpenter J."/>
            <person name="Chen E."/>
            <person name="Cherry J.M."/>
            <person name="Chung E."/>
            <person name="Duncan M."/>
            <person name="Hunicke-Smith S."/>
            <person name="Hyman R.W."/>
            <person name="Komp C."/>
            <person name="Lashkari D."/>
            <person name="Lew H."/>
            <person name="Lin D."/>
            <person name="Mosedale D."/>
            <person name="Nakahara K."/>
            <person name="Namath A."/>
            <person name="Oefner P."/>
            <person name="Oh C."/>
            <person name="Petel F.X."/>
            <person name="Roberts D."/>
            <person name="Schramm S."/>
            <person name="Schroeder M."/>
            <person name="Shogren T."/>
            <person name="Shroff N."/>
            <person name="Winant A."/>
            <person name="Yelton M.A."/>
            <person name="Botstein D."/>
            <person name="Davis R.W."/>
            <person name="Johnston M."/>
            <person name="Andrews S."/>
            <person name="Brinkman R."/>
            <person name="Cooper J."/>
            <person name="Ding H."/>
            <person name="Du Z."/>
            <person name="Favello A."/>
            <person name="Fulton L."/>
            <person name="Gattung S."/>
            <person name="Greco T."/>
            <person name="Hallsworth K."/>
            <person name="Hawkins J."/>
            <person name="Hillier L.W."/>
            <person name="Jier M."/>
            <person name="Johnson D."/>
            <person name="Johnston L."/>
            <person name="Kirsten J."/>
            <person name="Kucaba T."/>
            <person name="Langston Y."/>
            <person name="Latreille P."/>
            <person name="Le T."/>
            <person name="Mardis E."/>
            <person name="Menezes S."/>
            <person name="Miller N."/>
            <person name="Nhan M."/>
            <person name="Pauley A."/>
            <person name="Peluso D."/>
            <person name="Rifkin L."/>
            <person name="Riles L."/>
            <person name="Taich A."/>
            <person name="Trevaskis E."/>
            <person name="Vignati D."/>
            <person name="Wilcox L."/>
            <person name="Wohldman P."/>
            <person name="Vaudin M."/>
            <person name="Wilson R."/>
            <person name="Waterston R."/>
            <person name="Albermann K."/>
            <person name="Hani J."/>
            <person name="Heumann K."/>
            <person name="Kleine K."/>
            <person name="Mewes H.-W."/>
            <person name="Zollner A."/>
            <person name="Zaccaria P."/>
        </authorList>
    </citation>
    <scope>NUCLEOTIDE SEQUENCE [LARGE SCALE GENOMIC DNA]</scope>
    <source>
        <strain>ATCC 204508 / S288c</strain>
    </source>
</reference>
<reference key="2">
    <citation type="journal article" date="2014" name="G3 (Bethesda)">
        <title>The reference genome sequence of Saccharomyces cerevisiae: Then and now.</title>
        <authorList>
            <person name="Engel S.R."/>
            <person name="Dietrich F.S."/>
            <person name="Fisk D.G."/>
            <person name="Binkley G."/>
            <person name="Balakrishnan R."/>
            <person name="Costanzo M.C."/>
            <person name="Dwight S.S."/>
            <person name="Hitz B.C."/>
            <person name="Karra K."/>
            <person name="Nash R.S."/>
            <person name="Weng S."/>
            <person name="Wong E.D."/>
            <person name="Lloyd P."/>
            <person name="Skrzypek M.S."/>
            <person name="Miyasato S.R."/>
            <person name="Simison M."/>
            <person name="Cherry J.M."/>
        </authorList>
    </citation>
    <scope>GENOME REANNOTATION</scope>
    <source>
        <strain>ATCC 204508 / S288c</strain>
    </source>
</reference>
<reference key="3">
    <citation type="journal article" date="2003" name="Genome Res.">
        <title>Systematic discovery of new genes in the Saccharomyces cerevisiae genome.</title>
        <authorList>
            <person name="Kessler M.M."/>
            <person name="Zeng Q."/>
            <person name="Hogan S."/>
            <person name="Cook R."/>
            <person name="Morales A.J."/>
            <person name="Cottarel G."/>
        </authorList>
    </citation>
    <scope>GENOME REANNOTATION</scope>
</reference>
<reference key="4">
    <citation type="journal article" date="2012" name="Science">
        <title>High-resolution view of the yeast meiotic program revealed by ribosome profiling.</title>
        <authorList>
            <person name="Brar G.A."/>
            <person name="Yassour M."/>
            <person name="Friedman N."/>
            <person name="Regev A."/>
            <person name="Ingolia N.T."/>
            <person name="Weissman J.S."/>
        </authorList>
    </citation>
    <scope>IDENTIFICATION</scope>
</reference>
<sequence length="82" mass="9721">MYYLVPKTTYGNLQCSSLAMTFHERGESGDVLSCACRLYLYIMPLFFNTFLRQKYFQLCSNTPYRNNGEARYFCHLFRCSII</sequence>
<accession>P0C5L6</accession>
<accession>I2HB54</accession>
<protein>
    <recommendedName>
        <fullName>Uncharacterized protein YDL022C-A</fullName>
    </recommendedName>
</protein>
<proteinExistence type="predicted"/>
<keyword id="KW-1185">Reference proteome</keyword>
<gene>
    <name type="ordered locus">YDL022C-A</name>
    <name type="ORF">smORF101</name>
    <name type="ORF">SR3</name>
</gene>
<organism>
    <name type="scientific">Saccharomyces cerevisiae (strain ATCC 204508 / S288c)</name>
    <name type="common">Baker's yeast</name>
    <dbReference type="NCBI Taxonomy" id="559292"/>
    <lineage>
        <taxon>Eukaryota</taxon>
        <taxon>Fungi</taxon>
        <taxon>Dikarya</taxon>
        <taxon>Ascomycota</taxon>
        <taxon>Saccharomycotina</taxon>
        <taxon>Saccharomycetes</taxon>
        <taxon>Saccharomycetales</taxon>
        <taxon>Saccharomycetaceae</taxon>
        <taxon>Saccharomyces</taxon>
    </lineage>
</organism>